<accession>B2URR5</accession>
<organism>
    <name type="scientific">Helicobacter pylori (strain Shi470)</name>
    <dbReference type="NCBI Taxonomy" id="512562"/>
    <lineage>
        <taxon>Bacteria</taxon>
        <taxon>Pseudomonadati</taxon>
        <taxon>Campylobacterota</taxon>
        <taxon>Epsilonproteobacteria</taxon>
        <taxon>Campylobacterales</taxon>
        <taxon>Helicobacteraceae</taxon>
        <taxon>Helicobacter</taxon>
    </lineage>
</organism>
<evidence type="ECO:0000255" key="1">
    <source>
        <dbReference type="HAMAP-Rule" id="MF_01366"/>
    </source>
</evidence>
<evidence type="ECO:0000305" key="2"/>
<protein>
    <recommendedName>
        <fullName evidence="1">Large ribosomal subunit protein uL13</fullName>
    </recommendedName>
    <alternativeName>
        <fullName evidence="2">50S ribosomal protein L13</fullName>
    </alternativeName>
</protein>
<name>RL13_HELPS</name>
<dbReference type="EMBL" id="CP001072">
    <property type="protein sequence ID" value="ACD47547.1"/>
    <property type="molecule type" value="Genomic_DNA"/>
</dbReference>
<dbReference type="RefSeq" id="WP_000167683.1">
    <property type="nucleotide sequence ID" value="NC_010698.2"/>
</dbReference>
<dbReference type="SMR" id="B2URR5"/>
<dbReference type="KEGG" id="hps:HPSH_00410"/>
<dbReference type="HOGENOM" id="CLU_082184_2_2_7"/>
<dbReference type="GO" id="GO:0022625">
    <property type="term" value="C:cytosolic large ribosomal subunit"/>
    <property type="evidence" value="ECO:0007669"/>
    <property type="project" value="TreeGrafter"/>
</dbReference>
<dbReference type="GO" id="GO:0003729">
    <property type="term" value="F:mRNA binding"/>
    <property type="evidence" value="ECO:0007669"/>
    <property type="project" value="TreeGrafter"/>
</dbReference>
<dbReference type="GO" id="GO:0003735">
    <property type="term" value="F:structural constituent of ribosome"/>
    <property type="evidence" value="ECO:0007669"/>
    <property type="project" value="InterPro"/>
</dbReference>
<dbReference type="GO" id="GO:0017148">
    <property type="term" value="P:negative regulation of translation"/>
    <property type="evidence" value="ECO:0007669"/>
    <property type="project" value="TreeGrafter"/>
</dbReference>
<dbReference type="GO" id="GO:0006412">
    <property type="term" value="P:translation"/>
    <property type="evidence" value="ECO:0007669"/>
    <property type="project" value="UniProtKB-UniRule"/>
</dbReference>
<dbReference type="CDD" id="cd00392">
    <property type="entry name" value="Ribosomal_L13"/>
    <property type="match status" value="1"/>
</dbReference>
<dbReference type="FunFam" id="3.90.1180.10:FF:000004">
    <property type="entry name" value="50S ribosomal protein L13"/>
    <property type="match status" value="1"/>
</dbReference>
<dbReference type="Gene3D" id="3.90.1180.10">
    <property type="entry name" value="Ribosomal protein L13"/>
    <property type="match status" value="1"/>
</dbReference>
<dbReference type="HAMAP" id="MF_01366">
    <property type="entry name" value="Ribosomal_uL13"/>
    <property type="match status" value="1"/>
</dbReference>
<dbReference type="InterPro" id="IPR005822">
    <property type="entry name" value="Ribosomal_uL13"/>
</dbReference>
<dbReference type="InterPro" id="IPR005823">
    <property type="entry name" value="Ribosomal_uL13_bac-type"/>
</dbReference>
<dbReference type="InterPro" id="IPR023563">
    <property type="entry name" value="Ribosomal_uL13_CS"/>
</dbReference>
<dbReference type="InterPro" id="IPR036899">
    <property type="entry name" value="Ribosomal_uL13_sf"/>
</dbReference>
<dbReference type="NCBIfam" id="TIGR01066">
    <property type="entry name" value="rplM_bact"/>
    <property type="match status" value="1"/>
</dbReference>
<dbReference type="PANTHER" id="PTHR11545:SF2">
    <property type="entry name" value="LARGE RIBOSOMAL SUBUNIT PROTEIN UL13M"/>
    <property type="match status" value="1"/>
</dbReference>
<dbReference type="PANTHER" id="PTHR11545">
    <property type="entry name" value="RIBOSOMAL PROTEIN L13"/>
    <property type="match status" value="1"/>
</dbReference>
<dbReference type="Pfam" id="PF00572">
    <property type="entry name" value="Ribosomal_L13"/>
    <property type="match status" value="1"/>
</dbReference>
<dbReference type="PIRSF" id="PIRSF002181">
    <property type="entry name" value="Ribosomal_L13"/>
    <property type="match status" value="1"/>
</dbReference>
<dbReference type="SUPFAM" id="SSF52161">
    <property type="entry name" value="Ribosomal protein L13"/>
    <property type="match status" value="1"/>
</dbReference>
<dbReference type="PROSITE" id="PS00783">
    <property type="entry name" value="RIBOSOMAL_L13"/>
    <property type="match status" value="1"/>
</dbReference>
<keyword id="KW-0687">Ribonucleoprotein</keyword>
<keyword id="KW-0689">Ribosomal protein</keyword>
<feature type="chain" id="PRO_1000144139" description="Large ribosomal subunit protein uL13">
    <location>
        <begin position="1"/>
        <end position="141"/>
    </location>
</feature>
<gene>
    <name evidence="1" type="primary">rplM</name>
    <name type="ordered locus">HPSH_00410</name>
</gene>
<sequence>MTKTAKVNEIVRDWVVLDAKDKVFGRLITEIAVLLRGKHRPFYTPNVDCGDFVVVINANKVKFSGMKLEDKEYFTHSGYFGSTKSKTLQEMLEKTPEKLYHLAVRGMLPKTKLGKAMIKKLKVYRDDKHPHTAQTSKKDAK</sequence>
<reference key="1">
    <citation type="submission" date="2008-05" db="EMBL/GenBank/DDBJ databases">
        <title>Genome sequence of Helicobacter pylori from the remote Amazon: traces of Asian ancestry of the first Americans.</title>
        <authorList>
            <person name="Kersulyte D."/>
            <person name="Kalia A."/>
            <person name="Gilman R.H."/>
            <person name="Berg D.E."/>
        </authorList>
    </citation>
    <scope>NUCLEOTIDE SEQUENCE [LARGE SCALE GENOMIC DNA]</scope>
    <source>
        <strain>Shi470</strain>
    </source>
</reference>
<proteinExistence type="inferred from homology"/>
<comment type="function">
    <text evidence="1">This protein is one of the early assembly proteins of the 50S ribosomal subunit, although it is not seen to bind rRNA by itself. It is important during the early stages of 50S assembly.</text>
</comment>
<comment type="subunit">
    <text evidence="1">Part of the 50S ribosomal subunit.</text>
</comment>
<comment type="similarity">
    <text evidence="1">Belongs to the universal ribosomal protein uL13 family.</text>
</comment>